<feature type="chain" id="PRO_0000067220" description="Putative ankyrin repeat protein R873">
    <location>
        <begin position="1"/>
        <end position="468"/>
    </location>
</feature>
<feature type="repeat" description="ANK 1">
    <location>
        <begin position="38"/>
        <end position="68"/>
    </location>
</feature>
<feature type="repeat" description="ANK 2">
    <location>
        <begin position="78"/>
        <end position="107"/>
    </location>
</feature>
<feature type="repeat" description="ANK 3">
    <location>
        <begin position="109"/>
        <end position="137"/>
    </location>
</feature>
<feature type="repeat" description="ANK 4">
    <location>
        <begin position="138"/>
        <end position="167"/>
    </location>
</feature>
<feature type="repeat" description="ANK 5">
    <location>
        <begin position="169"/>
        <end position="197"/>
    </location>
</feature>
<feature type="repeat" description="ANK 6">
    <location>
        <begin position="198"/>
        <end position="227"/>
    </location>
</feature>
<feature type="repeat" description="ANK 7">
    <location>
        <begin position="229"/>
        <end position="257"/>
    </location>
</feature>
<feature type="repeat" description="ANK 8">
    <location>
        <begin position="258"/>
        <end position="287"/>
    </location>
</feature>
<feature type="repeat" description="ANK 9">
    <location>
        <begin position="289"/>
        <end position="316"/>
    </location>
</feature>
<feature type="repeat" description="ANK 10">
    <location>
        <begin position="317"/>
        <end position="346"/>
    </location>
</feature>
<feature type="repeat" description="ANK 11">
    <location>
        <begin position="348"/>
        <end position="376"/>
    </location>
</feature>
<feature type="repeat" description="ANK 12">
    <location>
        <begin position="378"/>
        <end position="406"/>
    </location>
</feature>
<feature type="repeat" description="ANK 13">
    <location>
        <begin position="407"/>
        <end position="436"/>
    </location>
</feature>
<feature type="repeat" description="ANK 14">
    <location>
        <begin position="438"/>
        <end position="466"/>
    </location>
</feature>
<organism>
    <name type="scientific">Acanthamoeba polyphaga mimivirus</name>
    <name type="common">APMV</name>
    <dbReference type="NCBI Taxonomy" id="212035"/>
    <lineage>
        <taxon>Viruses</taxon>
        <taxon>Varidnaviria</taxon>
        <taxon>Bamfordvirae</taxon>
        <taxon>Nucleocytoviricota</taxon>
        <taxon>Megaviricetes</taxon>
        <taxon>Imitervirales</taxon>
        <taxon>Mimiviridae</taxon>
        <taxon>Megamimivirinae</taxon>
        <taxon>Mimivirus</taxon>
        <taxon>Mimivirus bradfordmassiliense</taxon>
    </lineage>
</organism>
<proteinExistence type="predicted"/>
<organismHost>
    <name type="scientific">Acanthamoeba polyphaga</name>
    <name type="common">Amoeba</name>
    <dbReference type="NCBI Taxonomy" id="5757"/>
</organismHost>
<accession>Q5UP39</accession>
<gene>
    <name type="ordered locus">MIMI_R873</name>
</gene>
<name>YR873_MIMIV</name>
<reference key="1">
    <citation type="journal article" date="2004" name="Science">
        <title>The 1.2-megabase genome sequence of Mimivirus.</title>
        <authorList>
            <person name="Raoult D."/>
            <person name="Audic S."/>
            <person name="Robert C."/>
            <person name="Abergel C."/>
            <person name="Renesto P."/>
            <person name="Ogata H."/>
            <person name="La Scola B."/>
            <person name="Susan M."/>
            <person name="Claverie J.-M."/>
        </authorList>
    </citation>
    <scope>NUCLEOTIDE SEQUENCE [LARGE SCALE GENOMIC DNA]</scope>
    <source>
        <strain>Rowbotham-Bradford</strain>
    </source>
</reference>
<keyword id="KW-0040">ANK repeat</keyword>
<keyword id="KW-1185">Reference proteome</keyword>
<keyword id="KW-0677">Repeat</keyword>
<dbReference type="EMBL" id="AY653733">
    <property type="protein sequence ID" value="AAV51131.1"/>
    <property type="molecule type" value="Genomic_DNA"/>
</dbReference>
<dbReference type="SMR" id="Q5UP39"/>
<dbReference type="KEGG" id="vg:9925540"/>
<dbReference type="OrthoDB" id="38654at10239"/>
<dbReference type="Proteomes" id="UP000001134">
    <property type="component" value="Genome"/>
</dbReference>
<dbReference type="Gene3D" id="1.25.40.20">
    <property type="entry name" value="Ankyrin repeat-containing domain"/>
    <property type="match status" value="4"/>
</dbReference>
<dbReference type="InterPro" id="IPR002110">
    <property type="entry name" value="Ankyrin_rpt"/>
</dbReference>
<dbReference type="InterPro" id="IPR036770">
    <property type="entry name" value="Ankyrin_rpt-contain_sf"/>
</dbReference>
<dbReference type="PANTHER" id="PTHR24188">
    <property type="entry name" value="ANKYRIN REPEAT PROTEIN"/>
    <property type="match status" value="1"/>
</dbReference>
<dbReference type="PANTHER" id="PTHR24188:SF29">
    <property type="entry name" value="GH09064P"/>
    <property type="match status" value="1"/>
</dbReference>
<dbReference type="Pfam" id="PF12796">
    <property type="entry name" value="Ank_2"/>
    <property type="match status" value="4"/>
</dbReference>
<dbReference type="SMART" id="SM00248">
    <property type="entry name" value="ANK"/>
    <property type="match status" value="13"/>
</dbReference>
<dbReference type="SUPFAM" id="SSF48403">
    <property type="entry name" value="Ankyrin repeat"/>
    <property type="match status" value="2"/>
</dbReference>
<dbReference type="PROSITE" id="PS50297">
    <property type="entry name" value="ANK_REP_REGION"/>
    <property type="match status" value="1"/>
</dbReference>
<dbReference type="PROSITE" id="PS50088">
    <property type="entry name" value="ANK_REPEAT"/>
    <property type="match status" value="10"/>
</dbReference>
<sequence length="468" mass="52329">MYDELPPELWVKIVDYSGEIALLLTNTSFFELVSLINIKTDIIEYIVDNNLLDVLKYFVVLKNLKHNLIDGKIITLKSLNENLVKNCEKGNIEIIKYLLDIGADIEGKDNCAVLTASHHGHIEVVKYLVCKGANFRANNDKAVRWASDKGHLDVVKYLVSQGSDIRSENDCSICWASGNGHLEMVKYLVSQGVNIRTNDDWAIRLASENGHLEVVKYLVSQGADIRSQDDHAIKWASGNGHLEMVKYLVSQSSNIIAEDNYAVRWASENGHLEVIKYLVSQGSNITSNYYTIIAASKNGHIDIVKYLVSQGVNIRDCDSSAVQIASENGHLEVVKYLVSQGIDFREHDDLTFDMALRKGHVEIVKYLVGQGVDFRVYDDYPVRMASHCGRLGVVKYFVSQGADVRAEDDYAVRMSAEKGHIEVVKFLVDNGANIRADNDYAVRLASENGHIKIVEYLVSMGAVLNKKN</sequence>
<protein>
    <recommendedName>
        <fullName>Putative ankyrin repeat protein R873</fullName>
    </recommendedName>
</protein>